<dbReference type="EMBL" id="U89997">
    <property type="protein sequence ID" value="AAB66697.1"/>
    <property type="molecule type" value="mRNA"/>
</dbReference>
<dbReference type="EMBL" id="BC003748">
    <property type="protein sequence ID" value="AAH03748.1"/>
    <property type="molecule type" value="mRNA"/>
</dbReference>
<dbReference type="CCDS" id="CCDS27479.1">
    <molecule id="Q99L88-1"/>
</dbReference>
<dbReference type="RefSeq" id="NP_001398698.1">
    <molecule id="Q99L88-1"/>
    <property type="nucleotide sequence ID" value="NM_001411769.1"/>
</dbReference>
<dbReference type="RefSeq" id="NP_057876.1">
    <molecule id="Q99L88-1"/>
    <property type="nucleotide sequence ID" value="NM_016667.4"/>
</dbReference>
<dbReference type="RefSeq" id="XP_006520734.1">
    <property type="nucleotide sequence ID" value="XM_006520671.3"/>
</dbReference>
<dbReference type="SMR" id="Q99L88"/>
<dbReference type="BioGRID" id="203383">
    <property type="interactions" value="8"/>
</dbReference>
<dbReference type="CORUM" id="Q99L88"/>
<dbReference type="FunCoup" id="Q99L88">
    <property type="interactions" value="105"/>
</dbReference>
<dbReference type="IntAct" id="Q99L88">
    <property type="interactions" value="13"/>
</dbReference>
<dbReference type="MINT" id="Q99L88"/>
<dbReference type="STRING" id="10090.ENSMUSP00000041294"/>
<dbReference type="iPTMnet" id="Q99L88"/>
<dbReference type="PhosphoSitePlus" id="Q99L88"/>
<dbReference type="SwissPalm" id="Q99L88"/>
<dbReference type="jPOST" id="Q99L88"/>
<dbReference type="PaxDb" id="10090-ENSMUSP00000041294"/>
<dbReference type="PeptideAtlas" id="Q99L88"/>
<dbReference type="ProteomicsDB" id="257541">
    <molecule id="Q99L88-1"/>
</dbReference>
<dbReference type="ProteomicsDB" id="257542">
    <molecule id="Q99L88-2"/>
</dbReference>
<dbReference type="Antibodypedia" id="13755">
    <property type="antibodies" value="164 antibodies from 26 providers"/>
</dbReference>
<dbReference type="DNASU" id="20649"/>
<dbReference type="Ensembl" id="ENSMUST00000039769.13">
    <molecule id="Q99L88-1"/>
    <property type="protein sequence ID" value="ENSMUSP00000041294.6"/>
    <property type="gene ID" value="ENSMUSG00000060429.13"/>
</dbReference>
<dbReference type="Ensembl" id="ENSMUST00000110200.3">
    <molecule id="Q99L88-2"/>
    <property type="protein sequence ID" value="ENSMUSP00000105829.3"/>
    <property type="gene ID" value="ENSMUSG00000060429.13"/>
</dbReference>
<dbReference type="GeneID" id="20649"/>
<dbReference type="KEGG" id="mmu:20649"/>
<dbReference type="UCSC" id="uc007vsk.1">
    <molecule id="Q99L88-1"/>
    <property type="organism name" value="mouse"/>
</dbReference>
<dbReference type="AGR" id="MGI:101781"/>
<dbReference type="CTD" id="6641"/>
<dbReference type="MGI" id="MGI:101781">
    <property type="gene designation" value="Sntb1"/>
</dbReference>
<dbReference type="VEuPathDB" id="HostDB:ENSMUSG00000060429"/>
<dbReference type="eggNOG" id="KOG3551">
    <property type="taxonomic scope" value="Eukaryota"/>
</dbReference>
<dbReference type="GeneTree" id="ENSGT00950000182863"/>
<dbReference type="HOGENOM" id="CLU_026406_3_1_1"/>
<dbReference type="InParanoid" id="Q99L88"/>
<dbReference type="OMA" id="NPQVRKM"/>
<dbReference type="OrthoDB" id="409749at2759"/>
<dbReference type="PhylomeDB" id="Q99L88"/>
<dbReference type="TreeFam" id="TF317932"/>
<dbReference type="Reactome" id="R-MMU-9913351">
    <property type="pathway name" value="Formation of the dystrophin-glycoprotein complex (DGC)"/>
</dbReference>
<dbReference type="BioGRID-ORCS" id="20649">
    <property type="hits" value="2 hits in 78 CRISPR screens"/>
</dbReference>
<dbReference type="ChiTaRS" id="Sntb1">
    <property type="organism name" value="mouse"/>
</dbReference>
<dbReference type="PRO" id="PR:Q99L88"/>
<dbReference type="Proteomes" id="UP000000589">
    <property type="component" value="Chromosome 15"/>
</dbReference>
<dbReference type="RNAct" id="Q99L88">
    <property type="molecule type" value="protein"/>
</dbReference>
<dbReference type="Bgee" id="ENSMUSG00000060429">
    <property type="expression patterns" value="Expressed in parotid gland and 203 other cell types or tissues"/>
</dbReference>
<dbReference type="GO" id="GO:0070161">
    <property type="term" value="C:anchoring junction"/>
    <property type="evidence" value="ECO:0007669"/>
    <property type="project" value="UniProtKB-SubCell"/>
</dbReference>
<dbReference type="GO" id="GO:0005737">
    <property type="term" value="C:cytoplasm"/>
    <property type="evidence" value="ECO:0007669"/>
    <property type="project" value="UniProtKB-KW"/>
</dbReference>
<dbReference type="GO" id="GO:0005856">
    <property type="term" value="C:cytoskeleton"/>
    <property type="evidence" value="ECO:0007669"/>
    <property type="project" value="UniProtKB-SubCell"/>
</dbReference>
<dbReference type="GO" id="GO:0032991">
    <property type="term" value="C:protein-containing complex"/>
    <property type="evidence" value="ECO:0000266"/>
    <property type="project" value="MGI"/>
</dbReference>
<dbReference type="GO" id="GO:0042383">
    <property type="term" value="C:sarcolemma"/>
    <property type="evidence" value="ECO:0007669"/>
    <property type="project" value="UniProtKB-SubCell"/>
</dbReference>
<dbReference type="GO" id="GO:0045202">
    <property type="term" value="C:synapse"/>
    <property type="evidence" value="ECO:0000314"/>
    <property type="project" value="MGI"/>
</dbReference>
<dbReference type="GO" id="GO:0003779">
    <property type="term" value="F:actin binding"/>
    <property type="evidence" value="ECO:0007669"/>
    <property type="project" value="UniProtKB-KW"/>
</dbReference>
<dbReference type="GO" id="GO:0005516">
    <property type="term" value="F:calmodulin binding"/>
    <property type="evidence" value="ECO:0007669"/>
    <property type="project" value="UniProtKB-KW"/>
</dbReference>
<dbReference type="GO" id="GO:0030165">
    <property type="term" value="F:PDZ domain binding"/>
    <property type="evidence" value="ECO:0007669"/>
    <property type="project" value="Ensembl"/>
</dbReference>
<dbReference type="GO" id="GO:0005198">
    <property type="term" value="F:structural molecule activity"/>
    <property type="evidence" value="ECO:0007669"/>
    <property type="project" value="InterPro"/>
</dbReference>
<dbReference type="CDD" id="cd06801">
    <property type="entry name" value="PDZ_syntrophin-like"/>
    <property type="match status" value="1"/>
</dbReference>
<dbReference type="CDD" id="cd00821">
    <property type="entry name" value="PH"/>
    <property type="match status" value="1"/>
</dbReference>
<dbReference type="CDD" id="cd01258">
    <property type="entry name" value="PHsplit_syntrophin"/>
    <property type="match status" value="1"/>
</dbReference>
<dbReference type="FunFam" id="2.30.29.30:FF:000304">
    <property type="entry name" value="Beta-1-syntrophin isoform 1"/>
    <property type="match status" value="1"/>
</dbReference>
<dbReference type="FunFam" id="2.30.29.30:FF:000307">
    <property type="entry name" value="Beta-1-syntrophin isoform 1"/>
    <property type="match status" value="1"/>
</dbReference>
<dbReference type="FunFam" id="2.30.29.30:FF:000314">
    <property type="entry name" value="Beta-1-syntrophin isoform 1"/>
    <property type="match status" value="1"/>
</dbReference>
<dbReference type="FunFam" id="2.30.42.10:FF:000052">
    <property type="entry name" value="Syntrophin beta 1"/>
    <property type="match status" value="1"/>
</dbReference>
<dbReference type="Gene3D" id="2.30.42.10">
    <property type="match status" value="1"/>
</dbReference>
<dbReference type="Gene3D" id="2.30.29.30">
    <property type="entry name" value="Pleckstrin-homology domain (PH domain)/Phosphotyrosine-binding domain (PTB)"/>
    <property type="match status" value="3"/>
</dbReference>
<dbReference type="InterPro" id="IPR001478">
    <property type="entry name" value="PDZ"/>
</dbReference>
<dbReference type="InterPro" id="IPR036034">
    <property type="entry name" value="PDZ_sf"/>
</dbReference>
<dbReference type="InterPro" id="IPR011993">
    <property type="entry name" value="PH-like_dom_sf"/>
</dbReference>
<dbReference type="InterPro" id="IPR001849">
    <property type="entry name" value="PH_domain"/>
</dbReference>
<dbReference type="InterPro" id="IPR041428">
    <property type="entry name" value="PHsplit_syntrophin"/>
</dbReference>
<dbReference type="InterPro" id="IPR015482">
    <property type="entry name" value="Syntrophin"/>
</dbReference>
<dbReference type="InterPro" id="IPR055108">
    <property type="entry name" value="Syntrophin_4th"/>
</dbReference>
<dbReference type="PANTHER" id="PTHR10554:SF11">
    <property type="entry name" value="BETA-1-SYNTROPHIN"/>
    <property type="match status" value="1"/>
</dbReference>
<dbReference type="PANTHER" id="PTHR10554">
    <property type="entry name" value="SYNTROPHIN"/>
    <property type="match status" value="1"/>
</dbReference>
<dbReference type="Pfam" id="PF00595">
    <property type="entry name" value="PDZ"/>
    <property type="match status" value="1"/>
</dbReference>
<dbReference type="Pfam" id="PF00169">
    <property type="entry name" value="PH"/>
    <property type="match status" value="1"/>
</dbReference>
<dbReference type="Pfam" id="PF18012">
    <property type="entry name" value="PH_17"/>
    <property type="match status" value="1"/>
</dbReference>
<dbReference type="Pfam" id="PF23012">
    <property type="entry name" value="Syntrophin_4th"/>
    <property type="match status" value="1"/>
</dbReference>
<dbReference type="SMART" id="SM00228">
    <property type="entry name" value="PDZ"/>
    <property type="match status" value="1"/>
</dbReference>
<dbReference type="SMART" id="SM00233">
    <property type="entry name" value="PH"/>
    <property type="match status" value="2"/>
</dbReference>
<dbReference type="SUPFAM" id="SSF50156">
    <property type="entry name" value="PDZ domain-like"/>
    <property type="match status" value="1"/>
</dbReference>
<dbReference type="SUPFAM" id="SSF50729">
    <property type="entry name" value="PH domain-like"/>
    <property type="match status" value="2"/>
</dbReference>
<dbReference type="PROSITE" id="PS50106">
    <property type="entry name" value="PDZ"/>
    <property type="match status" value="1"/>
</dbReference>
<dbReference type="PROSITE" id="PS50003">
    <property type="entry name" value="PH_DOMAIN"/>
    <property type="match status" value="2"/>
</dbReference>
<sequence>MAVAAAAVAAPAGGGGARAQRSGLLEVLVRDRWHKVLVNLSEDALVLSCEEGAAAYNGIGAATNGSFCRGSGTGHPVPGVAQAPDSPAGVRTAFTDLPEQVPESISNQKRGVKVLKQELGGLGISIKGGKENKMPILISKIFKGLAADQTQALYVGDAILSVNGADLRDATHDEAVQALKRAGKEVLLEVKYMREATPYVKKGSPVSEIGWETPPPESPRLGGGSAEPLSSQSFSFHRDRKSIPLKMCYVTRNMTLADPENRQLEIHSPDAKHTVILRSKDSATAQAWFSAIHSNAGDLLTRVVADIREQLGKTGIAGSREIRHLGWLAEKVPGESEKQWKPALVVLTEKDLLIYDSMPRRKEAWFSPVHSYPLLATRLVHSGPGKGSPQAGMDLSFATRTGTKQGIETHLFRAEISRDLSHWTRSIVQGCHNSAELTAEITTACTYRNQECRLTIHYDNGFSISTEPQDGAFPKTIIQSPYEKLKMSSDDGIRMLYLDFGGKEGEIQLDLHSCPKPIVFIIHSFLSAKITRLGLVA</sequence>
<reference key="1">
    <citation type="journal article" date="1997" name="J. Cell Biol.">
        <title>Differential association of syntrophin pairs with the dystrophin complex.</title>
        <authorList>
            <person name="Peters M.F."/>
            <person name="Adams M.E."/>
            <person name="Froehner S.C."/>
        </authorList>
    </citation>
    <scope>NUCLEOTIDE SEQUENCE [MRNA] (ISOFORM 1)</scope>
    <scope>SUBCELLULAR LOCATION</scope>
    <scope>INTERACTION WITH DMD; DTNA AND UTRN</scope>
</reference>
<reference key="2">
    <citation type="journal article" date="2004" name="Genome Res.">
        <title>The status, quality, and expansion of the NIH full-length cDNA project: the Mammalian Gene Collection (MGC).</title>
        <authorList>
            <consortium name="The MGC Project Team"/>
        </authorList>
    </citation>
    <scope>NUCLEOTIDE SEQUENCE [LARGE SCALE MRNA] (ISOFORM 2)</scope>
    <source>
        <tissue>Mammary tumor</tissue>
    </source>
</reference>
<reference key="3">
    <citation type="journal article" date="1998" name="J. Neurosci.">
        <title>Interaction of muscle and brain sodium channels with multiple members of the syntrophin family of dystrophin-associated proteins.</title>
        <authorList>
            <person name="Gee S.H."/>
            <person name="Madhavan R."/>
            <person name="Levinson S.R."/>
            <person name="Caldwell J.H."/>
            <person name="Sealock R."/>
            <person name="Froehner S.C."/>
        </authorList>
    </citation>
    <scope>INTERACTION WITH SCN4A AND SCN5A</scope>
</reference>
<reference key="4">
    <citation type="journal article" date="2000" name="J. Cell Sci.">
        <title>Assembly of multiple dystrobrevin-containing complexes in the kidney.</title>
        <authorList>
            <person name="Loh N.Y."/>
            <person name="Newey S.E."/>
            <person name="Davies K.E."/>
            <person name="Blake D.J."/>
        </authorList>
    </citation>
    <scope>INTERACTION WITH DTNB</scope>
</reference>
<reference key="5">
    <citation type="journal article" date="2007" name="Proc. Natl. Acad. Sci. U.S.A.">
        <title>Large-scale phosphorylation analysis of mouse liver.</title>
        <authorList>
            <person name="Villen J."/>
            <person name="Beausoleil S.A."/>
            <person name="Gerber S.A."/>
            <person name="Gygi S.P."/>
        </authorList>
    </citation>
    <scope>PHOSPHORYLATION [LARGE SCALE ANALYSIS] AT SER-86; THR-213 AND SER-218</scope>
    <scope>IDENTIFICATION BY MASS SPECTROMETRY [LARGE SCALE ANALYSIS]</scope>
    <source>
        <tissue>Liver</tissue>
    </source>
</reference>
<reference key="6">
    <citation type="journal article" date="2010" name="Cell">
        <title>A tissue-specific atlas of mouse protein phosphorylation and expression.</title>
        <authorList>
            <person name="Huttlin E.L."/>
            <person name="Jedrychowski M.P."/>
            <person name="Elias J.E."/>
            <person name="Goswami T."/>
            <person name="Rad R."/>
            <person name="Beausoleil S.A."/>
            <person name="Villen J."/>
            <person name="Haas W."/>
            <person name="Sowa M.E."/>
            <person name="Gygi S.P."/>
        </authorList>
    </citation>
    <scope>PHOSPHORYLATION [LARGE SCALE ANALYSIS] AT SER-86; SER-204; THR-213; SER-218; SER-225; SER-235 AND SER-388</scope>
    <scope>IDENTIFICATION BY MASS SPECTROMETRY [LARGE SCALE ANALYSIS]</scope>
    <source>
        <tissue>Brain</tissue>
        <tissue>Brown adipose tissue</tissue>
        <tissue>Heart</tissue>
        <tissue>Kidney</tissue>
        <tissue>Liver</tissue>
        <tissue>Lung</tissue>
        <tissue>Pancreas</tissue>
        <tissue>Spleen</tissue>
    </source>
</reference>
<name>SNTB1_MOUSE</name>
<accession>Q99L88</accession>
<accession>O35925</accession>
<gene>
    <name type="primary">Sntb1</name>
    <name type="synonym">Snt2b1</name>
</gene>
<evidence type="ECO:0000250" key="1"/>
<evidence type="ECO:0000250" key="2">
    <source>
        <dbReference type="UniProtKB" id="Q13884"/>
    </source>
</evidence>
<evidence type="ECO:0000255" key="3">
    <source>
        <dbReference type="PROSITE-ProRule" id="PRU00143"/>
    </source>
</evidence>
<evidence type="ECO:0000255" key="4">
    <source>
        <dbReference type="PROSITE-ProRule" id="PRU00145"/>
    </source>
</evidence>
<evidence type="ECO:0000256" key="5">
    <source>
        <dbReference type="SAM" id="MobiDB-lite"/>
    </source>
</evidence>
<evidence type="ECO:0000269" key="6">
    <source>
    </source>
</evidence>
<evidence type="ECO:0000269" key="7">
    <source>
    </source>
</evidence>
<evidence type="ECO:0000269" key="8">
    <source>
    </source>
</evidence>
<evidence type="ECO:0000303" key="9">
    <source>
    </source>
</evidence>
<evidence type="ECO:0000305" key="10"/>
<evidence type="ECO:0007744" key="11">
    <source>
    </source>
</evidence>
<evidence type="ECO:0007744" key="12">
    <source>
    </source>
</evidence>
<keyword id="KW-0007">Acetylation</keyword>
<keyword id="KW-0009">Actin-binding</keyword>
<keyword id="KW-0025">Alternative splicing</keyword>
<keyword id="KW-0106">Calcium</keyword>
<keyword id="KW-0112">Calmodulin-binding</keyword>
<keyword id="KW-0965">Cell junction</keyword>
<keyword id="KW-1003">Cell membrane</keyword>
<keyword id="KW-0963">Cytoplasm</keyword>
<keyword id="KW-0206">Cytoskeleton</keyword>
<keyword id="KW-0472">Membrane</keyword>
<keyword id="KW-0597">Phosphoprotein</keyword>
<keyword id="KW-1185">Reference proteome</keyword>
<keyword id="KW-0677">Repeat</keyword>
<organism>
    <name type="scientific">Mus musculus</name>
    <name type="common">Mouse</name>
    <dbReference type="NCBI Taxonomy" id="10090"/>
    <lineage>
        <taxon>Eukaryota</taxon>
        <taxon>Metazoa</taxon>
        <taxon>Chordata</taxon>
        <taxon>Craniata</taxon>
        <taxon>Vertebrata</taxon>
        <taxon>Euteleostomi</taxon>
        <taxon>Mammalia</taxon>
        <taxon>Eutheria</taxon>
        <taxon>Euarchontoglires</taxon>
        <taxon>Glires</taxon>
        <taxon>Rodentia</taxon>
        <taxon>Myomorpha</taxon>
        <taxon>Muroidea</taxon>
        <taxon>Muridae</taxon>
        <taxon>Murinae</taxon>
        <taxon>Mus</taxon>
        <taxon>Mus</taxon>
    </lineage>
</organism>
<comment type="function">
    <text>Adapter protein that binds to and probably organizes the subcellular localization of a variety of membrane proteins. May link various receptors to the actin cytoskeleton and the dystrophin glycoprotein complex.</text>
</comment>
<comment type="subunit">
    <text evidence="1 6 7 8 10">Monomer and homodimer (Probable). Interacts with the viral HTLV-1 TAX protein and other members of the syntrophin family: SNTA1 and SNTB2 (By similarity). Interacts with the dystrophin protein DMD and related proteins DTNA and UTRN and with the sodium channel proteins SCN4A and SCN5A. Interacts with DTNB (PubMed:10893187).</text>
</comment>
<comment type="interaction">
    <interactant intactId="EBI-295943">
        <id>Q99L88</id>
    </interactant>
    <interactant intactId="EBI-489993">
        <id>P25100</id>
        <label>ADRA1D</label>
    </interactant>
    <organismsDiffer>true</organismsDiffer>
    <experiments>2</experiments>
</comment>
<comment type="subcellular location">
    <subcellularLocation>
        <location evidence="7">Cell membrane</location>
        <location evidence="7">Sarcolemma</location>
        <topology evidence="7">Peripheral membrane protein</topology>
        <orientation evidence="7">Cytoplasmic side</orientation>
    </subcellularLocation>
    <subcellularLocation>
        <location evidence="7">Cell junction</location>
    </subcellularLocation>
    <subcellularLocation>
        <location evidence="7">Cytoplasm</location>
        <location evidence="7">Cytoskeleton</location>
    </subcellularLocation>
    <text>In skeletal muscle, it localizes at the cytoplasmic side of the sarcolemmal membrane and at neuromuscular junctions.</text>
</comment>
<comment type="alternative products">
    <event type="alternative splicing"/>
    <isoform>
        <id>Q99L88-1</id>
        <name>1</name>
        <sequence type="displayed"/>
    </isoform>
    <isoform>
        <id>Q99L88-2</id>
        <name>2</name>
        <sequence type="described" ref="VSP_006356 VSP_006357"/>
    </isoform>
</comment>
<comment type="tissue specificity">
    <text>Ubiquitous. Expressed at high levels in the liver.</text>
</comment>
<comment type="domain">
    <text evidence="1">The PH 1 domain mediates the oligomerization in a calcium dependent manner.</text>
</comment>
<comment type="domain">
    <text evidence="1">The PDZ domain binds to the last three or four amino acids of ion channels and receptor proteins. The association with dystrophin or related proteins probably leaves the PDZ domain available to recruit proteins to the membrane (By similarity).</text>
</comment>
<comment type="domain">
    <text evidence="1">The SU domain binds calmodulin in a calcium-dependent manner.</text>
</comment>
<comment type="PTM">
    <text evidence="1">Phosphorylated by CaM-kinase II.</text>
</comment>
<comment type="similarity">
    <text evidence="10">Belongs to the syntrophin family.</text>
</comment>
<proteinExistence type="evidence at protein level"/>
<protein>
    <recommendedName>
        <fullName>Beta-1-syntrophin</fullName>
    </recommendedName>
    <alternativeName>
        <fullName>59 kDa dystrophin-associated protein A1 basic component 1</fullName>
        <shortName>DAPA1B</shortName>
    </alternativeName>
    <alternativeName>
        <fullName>Syntrophin-2</fullName>
    </alternativeName>
</protein>
<feature type="initiator methionine" description="Removed" evidence="2">
    <location>
        <position position="1"/>
    </location>
</feature>
<feature type="chain" id="PRO_0000184010" description="Beta-1-syntrophin">
    <location>
        <begin position="2"/>
        <end position="537"/>
    </location>
</feature>
<feature type="domain" description="PH 1" evidence="4">
    <location>
        <begin position="18"/>
        <end position="297"/>
    </location>
</feature>
<feature type="domain" description="PDZ" evidence="3">
    <location>
        <begin position="111"/>
        <end position="194"/>
    </location>
</feature>
<feature type="domain" description="PH 2" evidence="4">
    <location>
        <begin position="321"/>
        <end position="432"/>
    </location>
</feature>
<feature type="domain" description="SU">
    <location>
        <begin position="481"/>
        <end position="537"/>
    </location>
</feature>
<feature type="region of interest" description="Disordered" evidence="5">
    <location>
        <begin position="204"/>
        <end position="233"/>
    </location>
</feature>
<feature type="region of interest" description="Calmodulin-binding" evidence="1">
    <location>
        <begin position="517"/>
        <end position="537"/>
    </location>
</feature>
<feature type="modified residue" description="N-acetylalanine" evidence="2">
    <location>
        <position position="2"/>
    </location>
</feature>
<feature type="modified residue" description="Phosphoserine" evidence="11 12">
    <location>
        <position position="86"/>
    </location>
</feature>
<feature type="modified residue" description="Phosphoserine" evidence="2">
    <location>
        <position position="125"/>
    </location>
</feature>
<feature type="modified residue" description="Phosphoserine" evidence="12">
    <location>
        <position position="204"/>
    </location>
</feature>
<feature type="modified residue" description="Phosphothreonine" evidence="11 12">
    <location>
        <position position="213"/>
    </location>
</feature>
<feature type="modified residue" description="Phosphoserine" evidence="11 12">
    <location>
        <position position="218"/>
    </location>
</feature>
<feature type="modified residue" description="Phosphoserine" evidence="12">
    <location>
        <position position="225"/>
    </location>
</feature>
<feature type="modified residue" description="Phosphoserine" evidence="2">
    <location>
        <position position="231"/>
    </location>
</feature>
<feature type="modified residue" description="Phosphoserine" evidence="12">
    <location>
        <position position="235"/>
    </location>
</feature>
<feature type="modified residue" description="Phosphoserine" evidence="12">
    <location>
        <position position="388"/>
    </location>
</feature>
<feature type="splice variant" id="VSP_006356" description="In isoform 2." evidence="9">
    <original>RQLEIHSPDAKHTVI</original>
    <variation>STHPSDLIPIQGWAA</variation>
    <location>
        <begin position="262"/>
        <end position="276"/>
    </location>
</feature>
<feature type="splice variant" id="VSP_006357" description="In isoform 2." evidence="9">
    <location>
        <begin position="277"/>
        <end position="537"/>
    </location>
</feature>